<dbReference type="EMBL" id="AF296832">
    <property type="status" value="NOT_ANNOTATED_CDS"/>
    <property type="molecule type" value="Genomic_DNA"/>
</dbReference>
<dbReference type="EMBL" id="CP002688">
    <property type="protein sequence ID" value="AED92888.1"/>
    <property type="molecule type" value="Genomic_DNA"/>
</dbReference>
<dbReference type="EMBL" id="BT003915">
    <property type="protein sequence ID" value="AAO41962.1"/>
    <property type="molecule type" value="mRNA"/>
</dbReference>
<dbReference type="EMBL" id="BT020562">
    <property type="protein sequence ID" value="AAW70408.1"/>
    <property type="molecule type" value="mRNA"/>
</dbReference>
<dbReference type="EMBL" id="AY085686">
    <property type="protein sequence ID" value="AAM62905.1"/>
    <property type="molecule type" value="mRNA"/>
</dbReference>
<dbReference type="RefSeq" id="NP_197574.1">
    <molecule id="Q84WE4-1"/>
    <property type="nucleotide sequence ID" value="NM_122081.3"/>
</dbReference>
<dbReference type="SMR" id="Q84WE4"/>
<dbReference type="FunCoup" id="Q84WE4">
    <property type="interactions" value="111"/>
</dbReference>
<dbReference type="STRING" id="3702.Q84WE4"/>
<dbReference type="PaxDb" id="3702-AT5G20740.1"/>
<dbReference type="ProteomicsDB" id="236646">
    <molecule id="Q84WE4-1"/>
</dbReference>
<dbReference type="EnsemblPlants" id="AT5G20740.1">
    <molecule id="Q84WE4-1"/>
    <property type="protein sequence ID" value="AT5G20740.1"/>
    <property type="gene ID" value="AT5G20740"/>
</dbReference>
<dbReference type="GeneID" id="832197"/>
<dbReference type="Gramene" id="AT5G20740.1">
    <molecule id="Q84WE4-1"/>
    <property type="protein sequence ID" value="AT5G20740.1"/>
    <property type="gene ID" value="AT5G20740"/>
</dbReference>
<dbReference type="KEGG" id="ath:AT5G20740"/>
<dbReference type="Araport" id="AT5G20740"/>
<dbReference type="TAIR" id="AT5G20740"/>
<dbReference type="eggNOG" id="ENOG502RXR5">
    <property type="taxonomic scope" value="Eukaryota"/>
</dbReference>
<dbReference type="HOGENOM" id="CLU_033761_0_2_1"/>
<dbReference type="InParanoid" id="Q84WE4"/>
<dbReference type="OMA" id="SYPTICV"/>
<dbReference type="PhylomeDB" id="Q84WE4"/>
<dbReference type="PRO" id="PR:Q84WE4"/>
<dbReference type="Proteomes" id="UP000006548">
    <property type="component" value="Chromosome 5"/>
</dbReference>
<dbReference type="ExpressionAtlas" id="Q84WE4">
    <property type="expression patterns" value="baseline and differential"/>
</dbReference>
<dbReference type="GO" id="GO:0048046">
    <property type="term" value="C:apoplast"/>
    <property type="evidence" value="ECO:0007669"/>
    <property type="project" value="UniProtKB-SubCell"/>
</dbReference>
<dbReference type="GO" id="GO:0004857">
    <property type="term" value="F:enzyme inhibitor activity"/>
    <property type="evidence" value="ECO:0007669"/>
    <property type="project" value="InterPro"/>
</dbReference>
<dbReference type="GO" id="GO:1902183">
    <property type="term" value="P:regulation of shoot apical meristem development"/>
    <property type="evidence" value="ECO:0000315"/>
    <property type="project" value="UniProtKB"/>
</dbReference>
<dbReference type="CDD" id="cd15798">
    <property type="entry name" value="PMEI-like_3"/>
    <property type="match status" value="1"/>
</dbReference>
<dbReference type="FunFam" id="1.20.140.40:FF:000006">
    <property type="entry name" value="Pectinesterase inhibitor 3"/>
    <property type="match status" value="1"/>
</dbReference>
<dbReference type="Gene3D" id="1.20.140.40">
    <property type="entry name" value="Invertase/pectin methylesterase inhibitor family protein"/>
    <property type="match status" value="1"/>
</dbReference>
<dbReference type="InterPro" id="IPR035513">
    <property type="entry name" value="Invertase/methylesterase_inhib"/>
</dbReference>
<dbReference type="InterPro" id="IPR006501">
    <property type="entry name" value="Pectinesterase_inhib_dom"/>
</dbReference>
<dbReference type="InterPro" id="IPR051955">
    <property type="entry name" value="PME_Inhibitor"/>
</dbReference>
<dbReference type="NCBIfam" id="TIGR01614">
    <property type="entry name" value="PME_inhib"/>
    <property type="match status" value="1"/>
</dbReference>
<dbReference type="PANTHER" id="PTHR31080:SF110">
    <property type="entry name" value="PECTINESTERASE INHIBITOR 3"/>
    <property type="match status" value="1"/>
</dbReference>
<dbReference type="PANTHER" id="PTHR31080">
    <property type="entry name" value="PECTINESTERASE INHIBITOR-LIKE"/>
    <property type="match status" value="1"/>
</dbReference>
<dbReference type="Pfam" id="PF04043">
    <property type="entry name" value="PMEI"/>
    <property type="match status" value="1"/>
</dbReference>
<dbReference type="SMART" id="SM00856">
    <property type="entry name" value="PMEI"/>
    <property type="match status" value="1"/>
</dbReference>
<dbReference type="SUPFAM" id="SSF101148">
    <property type="entry name" value="Plant invertase/pectin methylesterase inhibitor"/>
    <property type="match status" value="1"/>
</dbReference>
<feature type="signal peptide" evidence="3">
    <location>
        <begin position="1"/>
        <end position="25"/>
    </location>
</feature>
<feature type="chain" id="PRO_5008428148" description="Pectinesterase inhibitor 3">
    <location>
        <begin position="26"/>
        <end position="205"/>
    </location>
</feature>
<feature type="disulfide bond" evidence="1">
    <location>
        <begin position="38"/>
        <end position="47"/>
    </location>
</feature>
<feature type="disulfide bond" evidence="1">
    <location>
        <begin position="104"/>
        <end position="156"/>
    </location>
</feature>
<feature type="sequence conflict" description="In Ref. 5; AAM62905." evidence="9" ref="5">
    <original>T</original>
    <variation>P</variation>
    <location>
        <position position="4"/>
    </location>
</feature>
<feature type="sequence conflict" description="In Ref. 5; AAM62905." evidence="9" ref="5">
    <original>T</original>
    <variation>I</variation>
    <location>
        <position position="22"/>
    </location>
</feature>
<feature type="sequence conflict" description="In Ref. 5; AAM62905." evidence="9" ref="5">
    <original>E</original>
    <variation>G</variation>
    <location>
        <position position="39"/>
    </location>
</feature>
<feature type="sequence conflict" description="In Ref. 5; AAM62905." evidence="9" ref="5">
    <original>V</original>
    <variation>I</variation>
    <location>
        <position position="190"/>
    </location>
</feature>
<reference key="1">
    <citation type="journal article" date="2000" name="Nature">
        <title>Sequence and analysis of chromosome 5 of the plant Arabidopsis thaliana.</title>
        <authorList>
            <person name="Tabata S."/>
            <person name="Kaneko T."/>
            <person name="Nakamura Y."/>
            <person name="Kotani H."/>
            <person name="Kato T."/>
            <person name="Asamizu E."/>
            <person name="Miyajima N."/>
            <person name="Sasamoto S."/>
            <person name="Kimura T."/>
            <person name="Hosouchi T."/>
            <person name="Kawashima K."/>
            <person name="Kohara M."/>
            <person name="Matsumoto M."/>
            <person name="Matsuno A."/>
            <person name="Muraki A."/>
            <person name="Nakayama S."/>
            <person name="Nakazaki N."/>
            <person name="Naruo K."/>
            <person name="Okumura S."/>
            <person name="Shinpo S."/>
            <person name="Takeuchi C."/>
            <person name="Wada T."/>
            <person name="Watanabe A."/>
            <person name="Yamada M."/>
            <person name="Yasuda M."/>
            <person name="Sato S."/>
            <person name="de la Bastide M."/>
            <person name="Huang E."/>
            <person name="Spiegel L."/>
            <person name="Gnoj L."/>
            <person name="O'Shaughnessy A."/>
            <person name="Preston R."/>
            <person name="Habermann K."/>
            <person name="Murray J."/>
            <person name="Johnson D."/>
            <person name="Rohlfing T."/>
            <person name="Nelson J."/>
            <person name="Stoneking T."/>
            <person name="Pepin K."/>
            <person name="Spieth J."/>
            <person name="Sekhon M."/>
            <person name="Armstrong J."/>
            <person name="Becker M."/>
            <person name="Belter E."/>
            <person name="Cordum H."/>
            <person name="Cordes M."/>
            <person name="Courtney L."/>
            <person name="Courtney W."/>
            <person name="Dante M."/>
            <person name="Du H."/>
            <person name="Edwards J."/>
            <person name="Fryman J."/>
            <person name="Haakensen B."/>
            <person name="Lamar E."/>
            <person name="Latreille P."/>
            <person name="Leonard S."/>
            <person name="Meyer R."/>
            <person name="Mulvaney E."/>
            <person name="Ozersky P."/>
            <person name="Riley A."/>
            <person name="Strowmatt C."/>
            <person name="Wagner-McPherson C."/>
            <person name="Wollam A."/>
            <person name="Yoakum M."/>
            <person name="Bell M."/>
            <person name="Dedhia N."/>
            <person name="Parnell L."/>
            <person name="Shah R."/>
            <person name="Rodriguez M."/>
            <person name="Hoon See L."/>
            <person name="Vil D."/>
            <person name="Baker J."/>
            <person name="Kirchoff K."/>
            <person name="Toth K."/>
            <person name="King L."/>
            <person name="Bahret A."/>
            <person name="Miller B."/>
            <person name="Marra M.A."/>
            <person name="Martienssen R."/>
            <person name="McCombie W.R."/>
            <person name="Wilson R.K."/>
            <person name="Murphy G."/>
            <person name="Bancroft I."/>
            <person name="Volckaert G."/>
            <person name="Wambutt R."/>
            <person name="Duesterhoeft A."/>
            <person name="Stiekema W."/>
            <person name="Pohl T."/>
            <person name="Entian K.-D."/>
            <person name="Terryn N."/>
            <person name="Hartley N."/>
            <person name="Bent E."/>
            <person name="Johnson S."/>
            <person name="Langham S.-A."/>
            <person name="McCullagh B."/>
            <person name="Robben J."/>
            <person name="Grymonprez B."/>
            <person name="Zimmermann W."/>
            <person name="Ramsperger U."/>
            <person name="Wedler H."/>
            <person name="Balke K."/>
            <person name="Wedler E."/>
            <person name="Peters S."/>
            <person name="van Staveren M."/>
            <person name="Dirkse W."/>
            <person name="Mooijman P."/>
            <person name="Klein Lankhorst R."/>
            <person name="Weitzenegger T."/>
            <person name="Bothe G."/>
            <person name="Rose M."/>
            <person name="Hauf J."/>
            <person name="Berneiser S."/>
            <person name="Hempel S."/>
            <person name="Feldpausch M."/>
            <person name="Lamberth S."/>
            <person name="Villarroel R."/>
            <person name="Gielen J."/>
            <person name="Ardiles W."/>
            <person name="Bents O."/>
            <person name="Lemcke K."/>
            <person name="Kolesov G."/>
            <person name="Mayer K.F.X."/>
            <person name="Rudd S."/>
            <person name="Schoof H."/>
            <person name="Schueller C."/>
            <person name="Zaccaria P."/>
            <person name="Mewes H.-W."/>
            <person name="Bevan M."/>
            <person name="Fransz P.F."/>
        </authorList>
    </citation>
    <scope>NUCLEOTIDE SEQUENCE [LARGE SCALE GENOMIC DNA]</scope>
    <source>
        <strain>cv. Columbia</strain>
    </source>
</reference>
<reference key="2">
    <citation type="journal article" date="2017" name="Plant J.">
        <title>Araport11: a complete reannotation of the Arabidopsis thaliana reference genome.</title>
        <authorList>
            <person name="Cheng C.Y."/>
            <person name="Krishnakumar V."/>
            <person name="Chan A.P."/>
            <person name="Thibaud-Nissen F."/>
            <person name="Schobel S."/>
            <person name="Town C.D."/>
        </authorList>
    </citation>
    <scope>GENOME REANNOTATION</scope>
    <source>
        <strain>cv. Columbia</strain>
    </source>
</reference>
<reference key="3">
    <citation type="journal article" date="2003" name="Science">
        <title>Empirical analysis of transcriptional activity in the Arabidopsis genome.</title>
        <authorList>
            <person name="Yamada K."/>
            <person name="Lim J."/>
            <person name="Dale J.M."/>
            <person name="Chen H."/>
            <person name="Shinn P."/>
            <person name="Palm C.J."/>
            <person name="Southwick A.M."/>
            <person name="Wu H.C."/>
            <person name="Kim C.J."/>
            <person name="Nguyen M."/>
            <person name="Pham P.K."/>
            <person name="Cheuk R.F."/>
            <person name="Karlin-Newmann G."/>
            <person name="Liu S.X."/>
            <person name="Lam B."/>
            <person name="Sakano H."/>
            <person name="Wu T."/>
            <person name="Yu G."/>
            <person name="Miranda M."/>
            <person name="Quach H.L."/>
            <person name="Tripp M."/>
            <person name="Chang C.H."/>
            <person name="Lee J.M."/>
            <person name="Toriumi M.J."/>
            <person name="Chan M.M."/>
            <person name="Tang C.C."/>
            <person name="Onodera C.S."/>
            <person name="Deng J.M."/>
            <person name="Akiyama K."/>
            <person name="Ansari Y."/>
            <person name="Arakawa T."/>
            <person name="Banh J."/>
            <person name="Banno F."/>
            <person name="Bowser L."/>
            <person name="Brooks S.Y."/>
            <person name="Carninci P."/>
            <person name="Chao Q."/>
            <person name="Choy N."/>
            <person name="Enju A."/>
            <person name="Goldsmith A.D."/>
            <person name="Gurjal M."/>
            <person name="Hansen N.F."/>
            <person name="Hayashizaki Y."/>
            <person name="Johnson-Hopson C."/>
            <person name="Hsuan V.W."/>
            <person name="Iida K."/>
            <person name="Karnes M."/>
            <person name="Khan S."/>
            <person name="Koesema E."/>
            <person name="Ishida J."/>
            <person name="Jiang P.X."/>
            <person name="Jones T."/>
            <person name="Kawai J."/>
            <person name="Kamiya A."/>
            <person name="Meyers C."/>
            <person name="Nakajima M."/>
            <person name="Narusaka M."/>
            <person name="Seki M."/>
            <person name="Sakurai T."/>
            <person name="Satou M."/>
            <person name="Tamse R."/>
            <person name="Vaysberg M."/>
            <person name="Wallender E.K."/>
            <person name="Wong C."/>
            <person name="Yamamura Y."/>
            <person name="Yuan S."/>
            <person name="Shinozaki K."/>
            <person name="Davis R.W."/>
            <person name="Theologis A."/>
            <person name="Ecker J.R."/>
        </authorList>
    </citation>
    <scope>NUCLEOTIDE SEQUENCE [LARGE SCALE MRNA]</scope>
    <source>
        <strain>cv. Columbia</strain>
    </source>
</reference>
<reference key="4">
    <citation type="submission" date="2005-01" db="EMBL/GenBank/DDBJ databases">
        <title>Arabidopsis ORF clones.</title>
        <authorList>
            <person name="Cheuk R.F."/>
            <person name="Chen H."/>
            <person name="Kim C.J."/>
            <person name="Shinn P."/>
            <person name="Ecker J.R."/>
        </authorList>
    </citation>
    <scope>NUCLEOTIDE SEQUENCE [LARGE SCALE MRNA]</scope>
    <source>
        <strain>cv. Columbia</strain>
    </source>
</reference>
<reference key="5">
    <citation type="submission" date="2002-03" db="EMBL/GenBank/DDBJ databases">
        <title>Full-length cDNA from Arabidopsis thaliana.</title>
        <authorList>
            <person name="Brover V.V."/>
            <person name="Troukhan M.E."/>
            <person name="Alexandrov N.A."/>
            <person name="Lu Y.-P."/>
            <person name="Flavell R.B."/>
            <person name="Feldmann K.A."/>
        </authorList>
    </citation>
    <scope>NUCLEOTIDE SEQUENCE [LARGE SCALE MRNA]</scope>
</reference>
<reference key="6">
    <citation type="journal article" date="2008" name="Curr. Biol.">
        <title>Arabidopsis phyllotaxis is controlled by the methyl-esterification status of cell-wall pectins.</title>
        <authorList>
            <person name="Peaucelle A."/>
            <person name="Louvet R."/>
            <person name="Johansen J.N."/>
            <person name="Hoefte H."/>
            <person name="Laufs P."/>
            <person name="Pelloux J."/>
            <person name="Mouille G."/>
        </authorList>
    </citation>
    <scope>FUNCTION</scope>
    <scope>TISSUE SPECIFICITY</scope>
</reference>
<reference key="7">
    <citation type="journal article" date="2017" name="Plant Physiol.">
        <title>Three pectin methyl esterase inhibitors protect cell wall integrity for immunity to Botrytis.</title>
        <authorList>
            <person name="Lionetti V."/>
            <person name="Fabri E."/>
            <person name="De Caroli M."/>
            <person name="Hansen A.R."/>
            <person name="Willats W.G."/>
            <person name="Piro G."/>
            <person name="Bellincampi D."/>
        </authorList>
    </citation>
    <scope>INDUCTION</scope>
</reference>
<reference key="8">
    <citation type="journal article" date="2022" name="Cell Surf.">
        <title>Biochemical characterization of pectin methylesterase inhibitor 3 from Arabidopsis thaliana.</title>
        <authorList>
            <person name="Xu F."/>
            <person name="Gonneau M."/>
            <person name="Faucher E."/>
            <person name="Habrylo O."/>
            <person name="Lefebvre V."/>
            <person name="Domon J.-M."/>
            <person name="Martin M."/>
            <person name="Senechal F."/>
            <person name="Peaucelle A."/>
            <person name="Pelloux J."/>
            <person name="Hoefte H."/>
        </authorList>
    </citation>
    <scope>FUNCTION</scope>
</reference>
<comment type="function">
    <text evidence="4 6">Pectin methylesterase (PME) inhibitor that can target PMEs (e.g. PME2 and PME3) in a pH-dependent manner, mainly in slightly acidic conditions (pH 6.3 and 5.0) but not at pH 7.5; this processus relies on changes in the protonation of amino acids involved in intermolecular and intramolecular interactions (PubMed:19097903, PubMed:36147700). Regulates de-methylesterification of pectins in the apical meristem and affects primordia formation and phyllotactic patterning (PubMed:19097903).</text>
</comment>
<comment type="subcellular location">
    <subcellularLocation>
        <location evidence="2">Secreted</location>
        <location evidence="2">Extracellular space</location>
        <location evidence="2">Apoplast</location>
    </subcellularLocation>
</comment>
<comment type="alternative products">
    <event type="alternative splicing"/>
    <isoform>
        <id>Q84WE4-1</id>
        <name>1</name>
        <sequence type="displayed"/>
    </isoform>
    <text evidence="9">A number of isoforms are produced. According to EST sequences.</text>
</comment>
<comment type="tissue specificity">
    <text evidence="4">Expressed in apical meristem.</text>
</comment>
<comment type="induction">
    <text evidence="5">Down-regulated in leaves during infection with Botrytis cinerea.</text>
</comment>
<comment type="similarity">
    <text evidence="9">Belongs to the PMEI family.</text>
</comment>
<proteinExistence type="evidence at transcript level"/>
<name>PMEI3_ARATH</name>
<gene>
    <name evidence="7" type="primary">PMEI3</name>
    <name evidence="10" type="ordered locus">At5g20740</name>
</gene>
<evidence type="ECO:0000250" key="1">
    <source>
        <dbReference type="UniProtKB" id="Q9LNF2"/>
    </source>
</evidence>
<evidence type="ECO:0000250" key="2">
    <source>
        <dbReference type="UniProtKB" id="Q9STY5"/>
    </source>
</evidence>
<evidence type="ECO:0000255" key="3"/>
<evidence type="ECO:0000269" key="4">
    <source>
    </source>
</evidence>
<evidence type="ECO:0000269" key="5">
    <source>
    </source>
</evidence>
<evidence type="ECO:0000269" key="6">
    <source>
    </source>
</evidence>
<evidence type="ECO:0000303" key="7">
    <source>
    </source>
</evidence>
<evidence type="ECO:0000303" key="8">
    <source>
    </source>
</evidence>
<evidence type="ECO:0000305" key="9"/>
<evidence type="ECO:0000312" key="10">
    <source>
        <dbReference type="Araport" id="AT5G20740"/>
    </source>
</evidence>
<protein>
    <recommendedName>
        <fullName evidence="9">Pectinesterase inhibitor 3</fullName>
    </recommendedName>
    <alternativeName>
        <fullName evidence="7">Pectin methylesterase inhibitor 3</fullName>
        <shortName evidence="8">AtPMEI3</shortName>
    </alternativeName>
</protein>
<keyword id="KW-0025">Alternative splicing</keyword>
<keyword id="KW-0052">Apoplast</keyword>
<keyword id="KW-1015">Disulfide bond</keyword>
<keyword id="KW-1185">Reference proteome</keyword>
<keyword id="KW-0964">Secreted</keyword>
<keyword id="KW-0732">Signal</keyword>
<accession>Q84WE4</accession>
<accession>Q8LE11</accession>
<organism>
    <name type="scientific">Arabidopsis thaliana</name>
    <name type="common">Mouse-ear cress</name>
    <dbReference type="NCBI Taxonomy" id="3702"/>
    <lineage>
        <taxon>Eukaryota</taxon>
        <taxon>Viridiplantae</taxon>
        <taxon>Streptophyta</taxon>
        <taxon>Embryophyta</taxon>
        <taxon>Tracheophyta</taxon>
        <taxon>Spermatophyta</taxon>
        <taxon>Magnoliopsida</taxon>
        <taxon>eudicotyledons</taxon>
        <taxon>Gunneridae</taxon>
        <taxon>Pentapetalae</taxon>
        <taxon>rosids</taxon>
        <taxon>malvids</taxon>
        <taxon>Brassicales</taxon>
        <taxon>Brassicaceae</taxon>
        <taxon>Camelineae</taxon>
        <taxon>Arabidopsis</taxon>
    </lineage>
</organism>
<sequence>MAPTQNLFLVAIAFAVIFTASTVHGRHNGAEDIVHSSCEHASYPSLCVRTLSSYSGPTITNRRDLAQAAIKISLSHAQSAAKKLAVVRDSVGKKKQEKAALVDCVEMIGDSVDELSRTLGVLKHLRVSGGSAKEFRWQMSNAQTWASAALTDDDTCLDGFQGMDDGEIKTEVKQWMTKVARVTSNALYMVNQLDETRGKPHDVHL</sequence>